<protein>
    <recommendedName>
        <fullName evidence="1">Imidazoleglycerol-phosphate dehydratase</fullName>
        <shortName evidence="1">IGPD</shortName>
        <ecNumber evidence="1">4.2.1.19</ecNumber>
    </recommendedName>
</protein>
<accession>Q88R45</accession>
<proteinExistence type="inferred from homology"/>
<keyword id="KW-0028">Amino-acid biosynthesis</keyword>
<keyword id="KW-0963">Cytoplasm</keyword>
<keyword id="KW-0368">Histidine biosynthesis</keyword>
<keyword id="KW-0456">Lyase</keyword>
<keyword id="KW-1185">Reference proteome</keyword>
<comment type="catalytic activity">
    <reaction evidence="1">
        <text>D-erythro-1-(imidazol-4-yl)glycerol 3-phosphate = 3-(imidazol-4-yl)-2-oxopropyl phosphate + H2O</text>
        <dbReference type="Rhea" id="RHEA:11040"/>
        <dbReference type="ChEBI" id="CHEBI:15377"/>
        <dbReference type="ChEBI" id="CHEBI:57766"/>
        <dbReference type="ChEBI" id="CHEBI:58278"/>
        <dbReference type="EC" id="4.2.1.19"/>
    </reaction>
</comment>
<comment type="pathway">
    <text evidence="1">Amino-acid biosynthesis; L-histidine biosynthesis; L-histidine from 5-phospho-alpha-D-ribose 1-diphosphate: step 6/9.</text>
</comment>
<comment type="subcellular location">
    <subcellularLocation>
        <location evidence="1">Cytoplasm</location>
    </subcellularLocation>
</comment>
<comment type="similarity">
    <text evidence="1">Belongs to the imidazoleglycerol-phosphate dehydratase family.</text>
</comment>
<comment type="sequence caution" evidence="2">
    <conflict type="erroneous initiation">
        <sequence resource="EMBL-CDS" id="AAN65920"/>
    </conflict>
</comment>
<organism>
    <name type="scientific">Pseudomonas putida (strain ATCC 47054 / DSM 6125 / CFBP 8728 / NCIMB 11950 / KT2440)</name>
    <dbReference type="NCBI Taxonomy" id="160488"/>
    <lineage>
        <taxon>Bacteria</taxon>
        <taxon>Pseudomonadati</taxon>
        <taxon>Pseudomonadota</taxon>
        <taxon>Gammaproteobacteria</taxon>
        <taxon>Pseudomonadales</taxon>
        <taxon>Pseudomonadaceae</taxon>
        <taxon>Pseudomonas</taxon>
    </lineage>
</organism>
<reference key="1">
    <citation type="journal article" date="2002" name="Environ. Microbiol.">
        <title>Complete genome sequence and comparative analysis of the metabolically versatile Pseudomonas putida KT2440.</title>
        <authorList>
            <person name="Nelson K.E."/>
            <person name="Weinel C."/>
            <person name="Paulsen I.T."/>
            <person name="Dodson R.J."/>
            <person name="Hilbert H."/>
            <person name="Martins dos Santos V.A.P."/>
            <person name="Fouts D.E."/>
            <person name="Gill S.R."/>
            <person name="Pop M."/>
            <person name="Holmes M."/>
            <person name="Brinkac L.M."/>
            <person name="Beanan M.J."/>
            <person name="DeBoy R.T."/>
            <person name="Daugherty S.C."/>
            <person name="Kolonay J.F."/>
            <person name="Madupu R."/>
            <person name="Nelson W.C."/>
            <person name="White O."/>
            <person name="Peterson J.D."/>
            <person name="Khouri H.M."/>
            <person name="Hance I."/>
            <person name="Chris Lee P."/>
            <person name="Holtzapple E.K."/>
            <person name="Scanlan D."/>
            <person name="Tran K."/>
            <person name="Moazzez A."/>
            <person name="Utterback T.R."/>
            <person name="Rizzo M."/>
            <person name="Lee K."/>
            <person name="Kosack D."/>
            <person name="Moestl D."/>
            <person name="Wedler H."/>
            <person name="Lauber J."/>
            <person name="Stjepandic D."/>
            <person name="Hoheisel J."/>
            <person name="Straetz M."/>
            <person name="Heim S."/>
            <person name="Kiewitz C."/>
            <person name="Eisen J.A."/>
            <person name="Timmis K.N."/>
            <person name="Duesterhoeft A."/>
            <person name="Tuemmler B."/>
            <person name="Fraser C.M."/>
        </authorList>
    </citation>
    <scope>NUCLEOTIDE SEQUENCE [LARGE SCALE GENOMIC DNA]</scope>
    <source>
        <strain>ATCC 47054 / DSM 6125 / CFBP 8728 / NCIMB 11950 / KT2440</strain>
    </source>
</reference>
<dbReference type="EC" id="4.2.1.19" evidence="1"/>
<dbReference type="EMBL" id="AE015451">
    <property type="protein sequence ID" value="AAN65920.1"/>
    <property type="status" value="ALT_INIT"/>
    <property type="molecule type" value="Genomic_DNA"/>
</dbReference>
<dbReference type="RefSeq" id="NP_742456.1">
    <property type="nucleotide sequence ID" value="NC_002947.4"/>
</dbReference>
<dbReference type="RefSeq" id="WP_003255736.1">
    <property type="nucleotide sequence ID" value="NZ_CP169744.1"/>
</dbReference>
<dbReference type="SMR" id="Q88R45"/>
<dbReference type="STRING" id="160488.PP_0289"/>
<dbReference type="PaxDb" id="160488-PP_0289"/>
<dbReference type="GeneID" id="97165801"/>
<dbReference type="KEGG" id="ppu:PP_0289"/>
<dbReference type="PATRIC" id="fig|160488.4.peg.314"/>
<dbReference type="eggNOG" id="COG0131">
    <property type="taxonomic scope" value="Bacteria"/>
</dbReference>
<dbReference type="HOGENOM" id="CLU_044308_2_0_6"/>
<dbReference type="OrthoDB" id="9790411at2"/>
<dbReference type="PhylomeDB" id="Q88R45"/>
<dbReference type="UniPathway" id="UPA00031">
    <property type="reaction ID" value="UER00011"/>
</dbReference>
<dbReference type="Proteomes" id="UP000000556">
    <property type="component" value="Chromosome"/>
</dbReference>
<dbReference type="GO" id="GO:0005737">
    <property type="term" value="C:cytoplasm"/>
    <property type="evidence" value="ECO:0007669"/>
    <property type="project" value="UniProtKB-SubCell"/>
</dbReference>
<dbReference type="GO" id="GO:0004424">
    <property type="term" value="F:imidazoleglycerol-phosphate dehydratase activity"/>
    <property type="evidence" value="ECO:0007669"/>
    <property type="project" value="UniProtKB-UniRule"/>
</dbReference>
<dbReference type="GO" id="GO:0000105">
    <property type="term" value="P:L-histidine biosynthetic process"/>
    <property type="evidence" value="ECO:0007669"/>
    <property type="project" value="UniProtKB-UniRule"/>
</dbReference>
<dbReference type="CDD" id="cd07914">
    <property type="entry name" value="IGPD"/>
    <property type="match status" value="1"/>
</dbReference>
<dbReference type="FunFam" id="3.30.230.40:FF:000002">
    <property type="entry name" value="Imidazoleglycerol-phosphate dehydratase"/>
    <property type="match status" value="1"/>
</dbReference>
<dbReference type="FunFam" id="3.30.230.40:FF:000003">
    <property type="entry name" value="Imidazoleglycerol-phosphate dehydratase HisB"/>
    <property type="match status" value="1"/>
</dbReference>
<dbReference type="Gene3D" id="3.30.230.40">
    <property type="entry name" value="Imidazole glycerol phosphate dehydratase, domain 1"/>
    <property type="match status" value="2"/>
</dbReference>
<dbReference type="HAMAP" id="MF_00076">
    <property type="entry name" value="HisB"/>
    <property type="match status" value="1"/>
</dbReference>
<dbReference type="InterPro" id="IPR038494">
    <property type="entry name" value="IGPD_sf"/>
</dbReference>
<dbReference type="InterPro" id="IPR000807">
    <property type="entry name" value="ImidazoleglycerolP_deHydtase"/>
</dbReference>
<dbReference type="InterPro" id="IPR020565">
    <property type="entry name" value="ImidazoleglycerP_deHydtase_CS"/>
</dbReference>
<dbReference type="InterPro" id="IPR020568">
    <property type="entry name" value="Ribosomal_Su5_D2-typ_SF"/>
</dbReference>
<dbReference type="NCBIfam" id="NF002106">
    <property type="entry name" value="PRK00951.1-1"/>
    <property type="match status" value="1"/>
</dbReference>
<dbReference type="NCBIfam" id="NF002111">
    <property type="entry name" value="PRK00951.2-1"/>
    <property type="match status" value="1"/>
</dbReference>
<dbReference type="NCBIfam" id="NF002114">
    <property type="entry name" value="PRK00951.2-4"/>
    <property type="match status" value="1"/>
</dbReference>
<dbReference type="PANTHER" id="PTHR23133:SF2">
    <property type="entry name" value="IMIDAZOLEGLYCEROL-PHOSPHATE DEHYDRATASE"/>
    <property type="match status" value="1"/>
</dbReference>
<dbReference type="PANTHER" id="PTHR23133">
    <property type="entry name" value="IMIDAZOLEGLYCEROL-PHOSPHATE DEHYDRATASE HIS7"/>
    <property type="match status" value="1"/>
</dbReference>
<dbReference type="Pfam" id="PF00475">
    <property type="entry name" value="IGPD"/>
    <property type="match status" value="1"/>
</dbReference>
<dbReference type="SUPFAM" id="SSF54211">
    <property type="entry name" value="Ribosomal protein S5 domain 2-like"/>
    <property type="match status" value="2"/>
</dbReference>
<dbReference type="PROSITE" id="PS00954">
    <property type="entry name" value="IGP_DEHYDRATASE_1"/>
    <property type="match status" value="1"/>
</dbReference>
<dbReference type="PROSITE" id="PS00955">
    <property type="entry name" value="IGP_DEHYDRATASE_2"/>
    <property type="match status" value="1"/>
</dbReference>
<gene>
    <name evidence="1" type="primary">hisB</name>
    <name type="ordered locus">PP_0289</name>
</gene>
<sequence length="197" mass="21943">MVERKASVERNTLETQVKCSINLDGSGKARFDIGVPFLEHMLDQIARHGLIDLDIECKGDTHIDDHHTVEDVGITLGMAFAQAIGDKKGIFRYGHAYVPLDEALSRVVIDFSGRPGLQMHVPYTRASVGGFDVDLFQEFFQGFVNHALVTLHIDNLRGHNTHHQIETVFKAFGRALRMAITLDERMAGQMPSTKGCL</sequence>
<evidence type="ECO:0000255" key="1">
    <source>
        <dbReference type="HAMAP-Rule" id="MF_00076"/>
    </source>
</evidence>
<evidence type="ECO:0000305" key="2"/>
<name>HIS7_PSEPK</name>
<feature type="chain" id="PRO_0000158157" description="Imidazoleglycerol-phosphate dehydratase">
    <location>
        <begin position="1"/>
        <end position="197"/>
    </location>
</feature>